<name>TPRT_ASFK5</name>
<organismHost>
    <name type="scientific">Ornithodoros</name>
    <name type="common">relapsing fever ticks</name>
    <dbReference type="NCBI Taxonomy" id="6937"/>
</organismHost>
<organismHost>
    <name type="scientific">Phacochoerus aethiopicus</name>
    <name type="common">Warthog</name>
    <dbReference type="NCBI Taxonomy" id="85517"/>
</organismHost>
<organismHost>
    <name type="scientific">Phacochoerus africanus</name>
    <name type="common">Warthog</name>
    <dbReference type="NCBI Taxonomy" id="41426"/>
</organismHost>
<organismHost>
    <name type="scientific">Potamochoerus larvatus</name>
    <name type="common">Bushpig</name>
    <dbReference type="NCBI Taxonomy" id="273792"/>
</organismHost>
<organismHost>
    <name type="scientific">Sus scrofa</name>
    <name type="common">Pig</name>
    <dbReference type="NCBI Taxonomy" id="9823"/>
</organismHost>
<feature type="chain" id="PRO_0000373160" description="Trans-prenyltransferase">
    <location>
        <begin position="1"/>
        <end position="318"/>
    </location>
</feature>
<feature type="transmembrane region" description="Helical" evidence="5">
    <location>
        <begin position="1"/>
        <end position="21"/>
    </location>
</feature>
<feature type="binding site" evidence="2">
    <location>
        <position position="85"/>
    </location>
    <ligand>
        <name>isopentenyl diphosphate</name>
        <dbReference type="ChEBI" id="CHEBI:128769"/>
    </ligand>
</feature>
<feature type="binding site" evidence="2">
    <location>
        <position position="88"/>
    </location>
    <ligand>
        <name>isopentenyl diphosphate</name>
        <dbReference type="ChEBI" id="CHEBI:128769"/>
    </ligand>
</feature>
<feature type="binding site" evidence="3">
    <location>
        <position position="122"/>
    </location>
    <ligand>
        <name>isopentenyl diphosphate</name>
        <dbReference type="ChEBI" id="CHEBI:128769"/>
    </ligand>
</feature>
<feature type="binding site" evidence="2">
    <location>
        <position position="129"/>
    </location>
    <ligand>
        <name>Mg(2+)</name>
        <dbReference type="ChEBI" id="CHEBI:18420"/>
        <label>1</label>
    </ligand>
</feature>
<feature type="binding site" evidence="2">
    <location>
        <position position="129"/>
    </location>
    <ligand>
        <name>Mg(2+)</name>
        <dbReference type="ChEBI" id="CHEBI:18420"/>
        <label>2</label>
    </ligand>
</feature>
<feature type="binding site" evidence="2">
    <location>
        <position position="135"/>
    </location>
    <ligand>
        <name>Mg(2+)</name>
        <dbReference type="ChEBI" id="CHEBI:18420"/>
        <label>1</label>
    </ligand>
</feature>
<feature type="binding site" evidence="2">
    <location>
        <position position="135"/>
    </location>
    <ligand>
        <name>Mg(2+)</name>
        <dbReference type="ChEBI" id="CHEBI:18420"/>
        <label>2</label>
    </ligand>
</feature>
<feature type="binding site" evidence="1">
    <location>
        <position position="140"/>
    </location>
    <ligand>
        <name>dimethylallyl diphosphate</name>
        <dbReference type="ChEBI" id="CHEBI:57623"/>
    </ligand>
</feature>
<feature type="binding site" evidence="2">
    <location>
        <position position="141"/>
    </location>
    <ligand>
        <name>isopentenyl diphosphate</name>
        <dbReference type="ChEBI" id="CHEBI:128769"/>
    </ligand>
</feature>
<feature type="binding site" evidence="1">
    <location>
        <position position="216"/>
    </location>
    <ligand>
        <name>dimethylallyl diphosphate</name>
        <dbReference type="ChEBI" id="CHEBI:57623"/>
    </ligand>
</feature>
<feature type="binding site" evidence="1">
    <location>
        <position position="217"/>
    </location>
    <ligand>
        <name>dimethylallyl diphosphate</name>
        <dbReference type="ChEBI" id="CHEBI:57623"/>
    </ligand>
</feature>
<feature type="binding site" evidence="1">
    <location>
        <position position="254"/>
    </location>
    <ligand>
        <name>dimethylallyl diphosphate</name>
        <dbReference type="ChEBI" id="CHEBI:57623"/>
    </ligand>
</feature>
<sequence>MLHLIYISIIVVLIIILISYTRKPQYFRITAPRSVALFHGIHPLNPKNYKTFSEEFETILNNAIEDGDFKGQLTEPCSYALRGGKYIRPIILMEIVRACQLQHSFGAPIYPAEAALAVEYFHVASLIIDDMPSFDNDVKRRNKDTVWARFGVAKAQMSALALTMQGFQNICRQVDWIKENCPRFPDPNQLGALLCTFVSHSLNSAGSGQLVDTPEKTIPFFKIAFIMGWVLGTGTIEDIGAIERAAHCFGNAFQLADDIKDHDTDTGRNYAKIHGKRKTFDVVAQSLQECKKILHEKKIYTSIWNEIFQKVINVALGT</sequence>
<dbReference type="EC" id="2.5.1.-"/>
<dbReference type="EC" id="2.5.1.1"/>
<dbReference type="EC" id="2.5.1.29"/>
<dbReference type="EC" id="2.5.1.10"/>
<dbReference type="EMBL" id="AY261360">
    <property type="status" value="NOT_ANNOTATED_CDS"/>
    <property type="molecule type" value="Genomic_DNA"/>
</dbReference>
<dbReference type="SMR" id="P0C9E2"/>
<dbReference type="UniPathway" id="UPA00259">
    <property type="reaction ID" value="UER00368"/>
</dbReference>
<dbReference type="UniPathway" id="UPA00260">
    <property type="reaction ID" value="UER00369"/>
</dbReference>
<dbReference type="UniPathway" id="UPA00389">
    <property type="reaction ID" value="UER00564"/>
</dbReference>
<dbReference type="Proteomes" id="UP000000861">
    <property type="component" value="Segment"/>
</dbReference>
<dbReference type="GO" id="GO:0044165">
    <property type="term" value="C:host cell endoplasmic reticulum"/>
    <property type="evidence" value="ECO:0007669"/>
    <property type="project" value="UniProtKB-SubCell"/>
</dbReference>
<dbReference type="GO" id="GO:0033644">
    <property type="term" value="C:host cell membrane"/>
    <property type="evidence" value="ECO:0007669"/>
    <property type="project" value="UniProtKB-SubCell"/>
</dbReference>
<dbReference type="GO" id="GO:0016020">
    <property type="term" value="C:membrane"/>
    <property type="evidence" value="ECO:0007669"/>
    <property type="project" value="UniProtKB-KW"/>
</dbReference>
<dbReference type="GO" id="GO:0004337">
    <property type="term" value="F:(2E,6E)-farnesyl diphosphate synthase activity"/>
    <property type="evidence" value="ECO:0007669"/>
    <property type="project" value="UniProtKB-EC"/>
</dbReference>
<dbReference type="GO" id="GO:0004161">
    <property type="term" value="F:dimethylallyltranstransferase activity"/>
    <property type="evidence" value="ECO:0007669"/>
    <property type="project" value="UniProtKB-EC"/>
</dbReference>
<dbReference type="GO" id="GO:0044687">
    <property type="term" value="F:geranylfarnesyl diphosphate synthase activity"/>
    <property type="evidence" value="ECO:0007669"/>
    <property type="project" value="RHEA"/>
</dbReference>
<dbReference type="GO" id="GO:0004311">
    <property type="term" value="F:geranylgeranyl diphosphate synthase activity"/>
    <property type="evidence" value="ECO:0007669"/>
    <property type="project" value="UniProtKB-EC"/>
</dbReference>
<dbReference type="GO" id="GO:0046872">
    <property type="term" value="F:metal ion binding"/>
    <property type="evidence" value="ECO:0007669"/>
    <property type="project" value="UniProtKB-KW"/>
</dbReference>
<dbReference type="GO" id="GO:0045337">
    <property type="term" value="P:farnesyl diphosphate biosynthetic process"/>
    <property type="evidence" value="ECO:0007669"/>
    <property type="project" value="UniProtKB-UniPathway"/>
</dbReference>
<dbReference type="GO" id="GO:0033384">
    <property type="term" value="P:geranyl diphosphate biosynthetic process"/>
    <property type="evidence" value="ECO:0007669"/>
    <property type="project" value="UniProtKB-UniPathway"/>
</dbReference>
<dbReference type="GO" id="GO:0033386">
    <property type="term" value="P:geranylgeranyl diphosphate biosynthetic process"/>
    <property type="evidence" value="ECO:0007669"/>
    <property type="project" value="UniProtKB-UniPathway"/>
</dbReference>
<dbReference type="Gene3D" id="1.10.600.10">
    <property type="entry name" value="Farnesyl Diphosphate Synthase"/>
    <property type="match status" value="1"/>
</dbReference>
<dbReference type="InterPro" id="IPR008949">
    <property type="entry name" value="Isoprenoid_synthase_dom_sf"/>
</dbReference>
<dbReference type="InterPro" id="IPR000092">
    <property type="entry name" value="Polyprenyl_synt"/>
</dbReference>
<dbReference type="PANTHER" id="PTHR43281">
    <property type="entry name" value="FARNESYL DIPHOSPHATE SYNTHASE"/>
    <property type="match status" value="1"/>
</dbReference>
<dbReference type="PANTHER" id="PTHR43281:SF1">
    <property type="entry name" value="FARNESYL DIPHOSPHATE SYNTHASE"/>
    <property type="match status" value="1"/>
</dbReference>
<dbReference type="Pfam" id="PF00348">
    <property type="entry name" value="polyprenyl_synt"/>
    <property type="match status" value="1"/>
</dbReference>
<dbReference type="SUPFAM" id="SSF48576">
    <property type="entry name" value="Terpenoid synthases"/>
    <property type="match status" value="1"/>
</dbReference>
<dbReference type="PROSITE" id="PS00444">
    <property type="entry name" value="POLYPRENYL_SYNTHASE_2"/>
    <property type="match status" value="1"/>
</dbReference>
<reference key="1">
    <citation type="submission" date="2003-03" db="EMBL/GenBank/DDBJ databases">
        <title>African swine fever virus genomes.</title>
        <authorList>
            <person name="Kutish G.F."/>
            <person name="Rock D.L."/>
        </authorList>
    </citation>
    <scope>NUCLEOTIDE SEQUENCE [LARGE SCALE GENOMIC DNA]</scope>
</reference>
<comment type="function">
    <text evidence="1">Trans-prenyltransferase that catalyzes the sequential condensation of isopentenyl diphosphate (IPP) with different allylic diphosphates, such as dimethylallyl diphosphate (DMAPP), geranyl diphosphate (GPP), farnesyl diphosphate (FPP) and geranylgeranyl diphosphate (GGPP), farnesyl diphosphate being the best allylic substrate.</text>
</comment>
<comment type="catalytic activity">
    <reaction>
        <text>isopentenyl diphosphate + dimethylallyl diphosphate = (2E)-geranyl diphosphate + diphosphate</text>
        <dbReference type="Rhea" id="RHEA:22408"/>
        <dbReference type="ChEBI" id="CHEBI:33019"/>
        <dbReference type="ChEBI" id="CHEBI:57623"/>
        <dbReference type="ChEBI" id="CHEBI:58057"/>
        <dbReference type="ChEBI" id="CHEBI:128769"/>
        <dbReference type="EC" id="2.5.1.1"/>
    </reaction>
</comment>
<comment type="catalytic activity">
    <reaction>
        <text>isopentenyl diphosphate + (2E)-geranyl diphosphate = (2E,6E)-farnesyl diphosphate + diphosphate</text>
        <dbReference type="Rhea" id="RHEA:19361"/>
        <dbReference type="ChEBI" id="CHEBI:33019"/>
        <dbReference type="ChEBI" id="CHEBI:58057"/>
        <dbReference type="ChEBI" id="CHEBI:128769"/>
        <dbReference type="ChEBI" id="CHEBI:175763"/>
        <dbReference type="EC" id="2.5.1.10"/>
    </reaction>
</comment>
<comment type="catalytic activity">
    <reaction>
        <text>isopentenyl diphosphate + (2E,6E)-farnesyl diphosphate = (2E,6E,10E)-geranylgeranyl diphosphate + diphosphate</text>
        <dbReference type="Rhea" id="RHEA:17653"/>
        <dbReference type="ChEBI" id="CHEBI:33019"/>
        <dbReference type="ChEBI" id="CHEBI:58756"/>
        <dbReference type="ChEBI" id="CHEBI:128769"/>
        <dbReference type="ChEBI" id="CHEBI:175763"/>
        <dbReference type="EC" id="2.5.1.29"/>
    </reaction>
</comment>
<comment type="catalytic activity">
    <reaction>
        <text>isopentenyl diphosphate + (2E,6E,10E)-geranylgeranyl diphosphate = (2E,6E,10E,14E)-geranylfarnesyl diphosphate + diphosphate</text>
        <dbReference type="Rhea" id="RHEA:25694"/>
        <dbReference type="ChEBI" id="CHEBI:33019"/>
        <dbReference type="ChEBI" id="CHEBI:57907"/>
        <dbReference type="ChEBI" id="CHEBI:58756"/>
        <dbReference type="ChEBI" id="CHEBI:128769"/>
    </reaction>
</comment>
<comment type="cofactor">
    <cofactor evidence="1">
        <name>Mg(2+)</name>
        <dbReference type="ChEBI" id="CHEBI:18420"/>
    </cofactor>
    <text evidence="1">Binds 2 Mg(2+) ions per subunit.</text>
</comment>
<comment type="pathway">
    <text>Isoprenoid biosynthesis; farnesyl diphosphate biosynthesis; farnesyl diphosphate from geranyl diphosphate and isopentenyl diphosphate: step 1/1.</text>
</comment>
<comment type="pathway">
    <text>Isoprenoid biosynthesis; geranyl diphosphate biosynthesis; geranyl diphosphate from dimethylallyl diphosphate and isopentenyl diphosphate: step 1/1.</text>
</comment>
<comment type="pathway">
    <text>Isoprenoid biosynthesis; geranylgeranyl diphosphate biosynthesis; geranylgeranyl diphosphate from farnesyl diphosphate and isopentenyl diphosphate: step 1/1.</text>
</comment>
<comment type="subcellular location">
    <subcellularLocation>
        <location>Host endoplasmic reticulum</location>
    </subcellularLocation>
    <subcellularLocation>
        <location evidence="1">Host membrane</location>
        <topology evidence="1">Single-pass membrane protein</topology>
    </subcellularLocation>
</comment>
<comment type="induction">
    <text evidence="4">Expressed in the late phase of the viral replicative cycle.</text>
</comment>
<comment type="similarity">
    <text evidence="6">Belongs to the FPP/GGPP synthase family. Asfivirus trans-prenyltransferase subfamily.</text>
</comment>
<evidence type="ECO:0000250" key="1"/>
<evidence type="ECO:0000250" key="2">
    <source>
        <dbReference type="UniProtKB" id="P14324"/>
    </source>
</evidence>
<evidence type="ECO:0000250" key="3">
    <source>
        <dbReference type="UniProtKB" id="Q12051"/>
    </source>
</evidence>
<evidence type="ECO:0000250" key="4">
    <source>
        <dbReference type="UniProtKB" id="Q65164"/>
    </source>
</evidence>
<evidence type="ECO:0000255" key="5"/>
<evidence type="ECO:0000305" key="6"/>
<gene>
    <name type="ordered locus">Ken-086</name>
</gene>
<keyword id="KW-1038">Host endoplasmic reticulum</keyword>
<keyword id="KW-1043">Host membrane</keyword>
<keyword id="KW-0414">Isoprene biosynthesis</keyword>
<keyword id="KW-0426">Late protein</keyword>
<keyword id="KW-0460">Magnesium</keyword>
<keyword id="KW-0472">Membrane</keyword>
<keyword id="KW-0479">Metal-binding</keyword>
<keyword id="KW-0808">Transferase</keyword>
<keyword id="KW-0812">Transmembrane</keyword>
<keyword id="KW-1133">Transmembrane helix</keyword>
<protein>
    <recommendedName>
        <fullName>Trans-prenyltransferase</fullName>
        <ecNumber>2.5.1.-</ecNumber>
    </recommendedName>
    <alternativeName>
        <fullName>(2E,6E)-farnesyl diphosphate synthase</fullName>
    </alternativeName>
    <alternativeName>
        <fullName>Dimethylallyltranstransferase</fullName>
        <ecNumber>2.5.1.1</ecNumber>
    </alternativeName>
    <alternativeName>
        <fullName>Farnesyl diphosphate synthase</fullName>
    </alternativeName>
    <alternativeName>
        <fullName>Farnesyltranstransferase</fullName>
        <ecNumber>2.5.1.29</ecNumber>
    </alternativeName>
    <alternativeName>
        <fullName>Geranyltranstransferase</fullName>
        <ecNumber>2.5.1.10</ecNumber>
    </alternativeName>
    <alternativeName>
        <fullName>Polyprenyl-diphosphate synthase</fullName>
    </alternativeName>
</protein>
<organism>
    <name type="scientific">African swine fever virus (isolate Pig/Kenya/KEN-50/1950)</name>
    <name type="common">ASFV</name>
    <dbReference type="NCBI Taxonomy" id="561445"/>
    <lineage>
        <taxon>Viruses</taxon>
        <taxon>Varidnaviria</taxon>
        <taxon>Bamfordvirae</taxon>
        <taxon>Nucleocytoviricota</taxon>
        <taxon>Pokkesviricetes</taxon>
        <taxon>Asfuvirales</taxon>
        <taxon>Asfarviridae</taxon>
        <taxon>Asfivirus</taxon>
        <taxon>African swine fever virus</taxon>
    </lineage>
</organism>
<accession>P0C9E2</accession>
<proteinExistence type="inferred from homology"/>